<reference key="1">
    <citation type="journal article" date="1996" name="J. Bacteriol.">
        <title>Identification and purification of a family of dimeric major cold shock protein homologs from the psychrotrophic Bacillus cereus WSBC 10201.</title>
        <authorList>
            <person name="Mayr B."/>
            <person name="Kaplan T."/>
            <person name="Lechner S."/>
            <person name="Scherer S."/>
        </authorList>
    </citation>
    <scope>NUCLEOTIDE SEQUENCE [GENOMIC DNA]</scope>
    <scope>PROTEIN SEQUENCE OF 1-7</scope>
    <source>
        <strain>WSBC 10201</strain>
    </source>
</reference>
<organism>
    <name type="scientific">Bacillus cereus</name>
    <dbReference type="NCBI Taxonomy" id="1396"/>
    <lineage>
        <taxon>Bacteria</taxon>
        <taxon>Bacillati</taxon>
        <taxon>Bacillota</taxon>
        <taxon>Bacilli</taxon>
        <taxon>Bacillales</taxon>
        <taxon>Bacillaceae</taxon>
        <taxon>Bacillus</taxon>
        <taxon>Bacillus cereus group</taxon>
    </lineage>
</organism>
<protein>
    <recommendedName>
        <fullName>Cold shock-like protein CspE</fullName>
    </recommendedName>
</protein>
<comment type="function">
    <text>Can bind to ATTGG and CCAAT motifs (Y-box motifs) of single-stranded oligonucleotides.</text>
</comment>
<comment type="subunit">
    <text>Homodimer.</text>
</comment>
<comment type="subcellular location">
    <subcellularLocation>
        <location>Cytoplasm</location>
    </subcellularLocation>
</comment>
<dbReference type="EMBL" id="X93043">
    <property type="protein sequence ID" value="CAA63611.1"/>
    <property type="molecule type" value="Genomic_DNA"/>
</dbReference>
<dbReference type="SMR" id="Q45100"/>
<dbReference type="eggNOG" id="COG1278">
    <property type="taxonomic scope" value="Bacteria"/>
</dbReference>
<dbReference type="GO" id="GO:0005737">
    <property type="term" value="C:cytoplasm"/>
    <property type="evidence" value="ECO:0007669"/>
    <property type="project" value="UniProtKB-SubCell"/>
</dbReference>
<dbReference type="GO" id="GO:0003677">
    <property type="term" value="F:DNA binding"/>
    <property type="evidence" value="ECO:0007669"/>
    <property type="project" value="UniProtKB-KW"/>
</dbReference>
<dbReference type="CDD" id="cd04458">
    <property type="entry name" value="CSP_CDS"/>
    <property type="match status" value="1"/>
</dbReference>
<dbReference type="FunFam" id="2.40.50.140:FF:000005">
    <property type="entry name" value="Cold shock protein CspE"/>
    <property type="match status" value="1"/>
</dbReference>
<dbReference type="Gene3D" id="2.40.50.140">
    <property type="entry name" value="Nucleic acid-binding proteins"/>
    <property type="match status" value="1"/>
</dbReference>
<dbReference type="InterPro" id="IPR012156">
    <property type="entry name" value="Cold_shock_CspA"/>
</dbReference>
<dbReference type="InterPro" id="IPR011129">
    <property type="entry name" value="CSD"/>
</dbReference>
<dbReference type="InterPro" id="IPR019844">
    <property type="entry name" value="CSD_CS"/>
</dbReference>
<dbReference type="InterPro" id="IPR002059">
    <property type="entry name" value="CSP_DNA-bd"/>
</dbReference>
<dbReference type="InterPro" id="IPR012340">
    <property type="entry name" value="NA-bd_OB-fold"/>
</dbReference>
<dbReference type="PANTHER" id="PTHR46565">
    <property type="entry name" value="COLD SHOCK DOMAIN PROTEIN 2"/>
    <property type="match status" value="1"/>
</dbReference>
<dbReference type="PANTHER" id="PTHR46565:SF20">
    <property type="entry name" value="COLD SHOCK DOMAIN-CONTAINING PROTEIN 4"/>
    <property type="match status" value="1"/>
</dbReference>
<dbReference type="Pfam" id="PF00313">
    <property type="entry name" value="CSD"/>
    <property type="match status" value="1"/>
</dbReference>
<dbReference type="PIRSF" id="PIRSF002599">
    <property type="entry name" value="Cold_shock_A"/>
    <property type="match status" value="1"/>
</dbReference>
<dbReference type="PRINTS" id="PR00050">
    <property type="entry name" value="COLDSHOCK"/>
</dbReference>
<dbReference type="SMART" id="SM00357">
    <property type="entry name" value="CSP"/>
    <property type="match status" value="1"/>
</dbReference>
<dbReference type="SUPFAM" id="SSF50249">
    <property type="entry name" value="Nucleic acid-binding proteins"/>
    <property type="match status" value="1"/>
</dbReference>
<dbReference type="PROSITE" id="PS00352">
    <property type="entry name" value="CSD_1"/>
    <property type="match status" value="1"/>
</dbReference>
<dbReference type="PROSITE" id="PS51857">
    <property type="entry name" value="CSD_2"/>
    <property type="match status" value="1"/>
</dbReference>
<feature type="chain" id="PRO_0000100292" description="Cold shock-like protein CspE">
    <location>
        <begin position="1"/>
        <end position="54" status="greater than"/>
    </location>
</feature>
<feature type="domain" description="CSD">
    <location>
        <begin position="5"/>
        <end position="54" status="greater than"/>
    </location>
</feature>
<feature type="non-terminal residue">
    <location>
        <position position="54"/>
    </location>
</feature>
<proteinExistence type="evidence at protein level"/>
<sequence>MTLTGKVKWFNSEKGFGFIEVADGSDVFVHFSAITGDGFKSLDEGQEVSFEVED</sequence>
<accession>Q45100</accession>
<name>CSPE_BACCE</name>
<gene>
    <name type="primary">cspE</name>
</gene>
<keyword id="KW-0010">Activator</keyword>
<keyword id="KW-0963">Cytoplasm</keyword>
<keyword id="KW-0903">Direct protein sequencing</keyword>
<keyword id="KW-0238">DNA-binding</keyword>
<keyword id="KW-0804">Transcription</keyword>
<keyword id="KW-0805">Transcription regulation</keyword>